<keyword id="KW-0031">Aminopeptidase</keyword>
<keyword id="KW-0963">Cytoplasm</keyword>
<keyword id="KW-0378">Hydrolase</keyword>
<keyword id="KW-0464">Manganese</keyword>
<keyword id="KW-0479">Metal-binding</keyword>
<keyword id="KW-0645">Protease</keyword>
<comment type="function">
    <text evidence="1">Presumably involved in the processing and regular turnover of intracellular proteins. Catalyzes the removal of unsubstituted N-terminal amino acids from various peptides.</text>
</comment>
<comment type="catalytic activity">
    <reaction evidence="1">
        <text>Release of an N-terminal amino acid, Xaa-|-Yaa-, in which Xaa is preferably Leu, but may be other amino acids including Pro although not Arg or Lys, and Yaa may be Pro. Amino acid amides and methyl esters are also readily hydrolyzed, but rates on arylamides are exceedingly low.</text>
        <dbReference type="EC" id="3.4.11.1"/>
    </reaction>
</comment>
<comment type="catalytic activity">
    <reaction evidence="1">
        <text>Release of an N-terminal amino acid, preferentially leucine, but not glutamic or aspartic acids.</text>
        <dbReference type="EC" id="3.4.11.10"/>
    </reaction>
</comment>
<comment type="cofactor">
    <cofactor evidence="1">
        <name>Mn(2+)</name>
        <dbReference type="ChEBI" id="CHEBI:29035"/>
    </cofactor>
    <text evidence="1">Binds 2 manganese ions per subunit.</text>
</comment>
<comment type="subcellular location">
    <subcellularLocation>
        <location evidence="1">Cytoplasm</location>
    </subcellularLocation>
</comment>
<comment type="similarity">
    <text evidence="1">Belongs to the peptidase M17 family.</text>
</comment>
<reference key="1">
    <citation type="journal article" date="2004" name="J. Bacteriol.">
        <title>Complete genome sequence of Rickettsia typhi and comparison with sequences of other Rickettsiae.</title>
        <authorList>
            <person name="McLeod M.P."/>
            <person name="Qin X."/>
            <person name="Karpathy S.E."/>
            <person name="Gioia J."/>
            <person name="Highlander S.K."/>
            <person name="Fox G.E."/>
            <person name="McNeill T.Z."/>
            <person name="Jiang H."/>
            <person name="Muzny D."/>
            <person name="Jacob L.S."/>
            <person name="Hawes A.C."/>
            <person name="Sodergren E."/>
            <person name="Gill R."/>
            <person name="Hume J."/>
            <person name="Morgan M."/>
            <person name="Fan G."/>
            <person name="Amin A.G."/>
            <person name="Gibbs R.A."/>
            <person name="Hong C."/>
            <person name="Yu X.-J."/>
            <person name="Walker D.H."/>
            <person name="Weinstock G.M."/>
        </authorList>
    </citation>
    <scope>NUCLEOTIDE SEQUENCE [LARGE SCALE GENOMIC DNA]</scope>
    <source>
        <strain>ATCC VR-144 / Wilmington</strain>
    </source>
</reference>
<name>AMPA_RICTY</name>
<evidence type="ECO:0000255" key="1">
    <source>
        <dbReference type="HAMAP-Rule" id="MF_00181"/>
    </source>
</evidence>
<protein>
    <recommendedName>
        <fullName evidence="1">Probable cytosol aminopeptidase</fullName>
        <ecNumber evidence="1">3.4.11.1</ecNumber>
    </recommendedName>
    <alternativeName>
        <fullName evidence="1">Leucine aminopeptidase</fullName>
        <shortName evidence="1">LAP</shortName>
        <ecNumber evidence="1">3.4.11.10</ecNumber>
    </alternativeName>
    <alternativeName>
        <fullName evidence="1">Leucyl aminopeptidase</fullName>
    </alternativeName>
</protein>
<dbReference type="EC" id="3.4.11.1" evidence="1"/>
<dbReference type="EC" id="3.4.11.10" evidence="1"/>
<dbReference type="EMBL" id="AE017197">
    <property type="protein sequence ID" value="AAU03616.1"/>
    <property type="molecule type" value="Genomic_DNA"/>
</dbReference>
<dbReference type="RefSeq" id="WP_011190603.1">
    <property type="nucleotide sequence ID" value="NC_006142.1"/>
</dbReference>
<dbReference type="SMR" id="Q68XM6"/>
<dbReference type="KEGG" id="rty:RT0131"/>
<dbReference type="eggNOG" id="COG0260">
    <property type="taxonomic scope" value="Bacteria"/>
</dbReference>
<dbReference type="HOGENOM" id="CLU_013734_6_0_5"/>
<dbReference type="OrthoDB" id="9809354at2"/>
<dbReference type="Proteomes" id="UP000000604">
    <property type="component" value="Chromosome"/>
</dbReference>
<dbReference type="GO" id="GO:0005737">
    <property type="term" value="C:cytoplasm"/>
    <property type="evidence" value="ECO:0007669"/>
    <property type="project" value="UniProtKB-SubCell"/>
</dbReference>
<dbReference type="GO" id="GO:0030145">
    <property type="term" value="F:manganese ion binding"/>
    <property type="evidence" value="ECO:0007669"/>
    <property type="project" value="UniProtKB-UniRule"/>
</dbReference>
<dbReference type="GO" id="GO:0070006">
    <property type="term" value="F:metalloaminopeptidase activity"/>
    <property type="evidence" value="ECO:0007669"/>
    <property type="project" value="InterPro"/>
</dbReference>
<dbReference type="GO" id="GO:0006508">
    <property type="term" value="P:proteolysis"/>
    <property type="evidence" value="ECO:0007669"/>
    <property type="project" value="UniProtKB-KW"/>
</dbReference>
<dbReference type="CDD" id="cd00433">
    <property type="entry name" value="Peptidase_M17"/>
    <property type="match status" value="1"/>
</dbReference>
<dbReference type="Gene3D" id="3.40.220.10">
    <property type="entry name" value="Leucine Aminopeptidase, subunit E, domain 1"/>
    <property type="match status" value="1"/>
</dbReference>
<dbReference type="Gene3D" id="3.40.630.10">
    <property type="entry name" value="Zn peptidases"/>
    <property type="match status" value="1"/>
</dbReference>
<dbReference type="HAMAP" id="MF_00181">
    <property type="entry name" value="Cytosol_peptidase_M17"/>
    <property type="match status" value="1"/>
</dbReference>
<dbReference type="InterPro" id="IPR011356">
    <property type="entry name" value="Leucine_aapep/pepB"/>
</dbReference>
<dbReference type="InterPro" id="IPR043472">
    <property type="entry name" value="Macro_dom-like"/>
</dbReference>
<dbReference type="InterPro" id="IPR000819">
    <property type="entry name" value="Peptidase_M17_C"/>
</dbReference>
<dbReference type="InterPro" id="IPR023042">
    <property type="entry name" value="Peptidase_M17_leu_NH2_pept"/>
</dbReference>
<dbReference type="InterPro" id="IPR008283">
    <property type="entry name" value="Peptidase_M17_N"/>
</dbReference>
<dbReference type="NCBIfam" id="NF002073">
    <property type="entry name" value="PRK00913.1-2"/>
    <property type="match status" value="1"/>
</dbReference>
<dbReference type="NCBIfam" id="NF002074">
    <property type="entry name" value="PRK00913.1-4"/>
    <property type="match status" value="1"/>
</dbReference>
<dbReference type="NCBIfam" id="NF002075">
    <property type="entry name" value="PRK00913.2-2"/>
    <property type="match status" value="1"/>
</dbReference>
<dbReference type="NCBIfam" id="NF002077">
    <property type="entry name" value="PRK00913.2-4"/>
    <property type="match status" value="1"/>
</dbReference>
<dbReference type="PANTHER" id="PTHR11963:SF23">
    <property type="entry name" value="CYTOSOL AMINOPEPTIDASE"/>
    <property type="match status" value="1"/>
</dbReference>
<dbReference type="PANTHER" id="PTHR11963">
    <property type="entry name" value="LEUCINE AMINOPEPTIDASE-RELATED"/>
    <property type="match status" value="1"/>
</dbReference>
<dbReference type="Pfam" id="PF00883">
    <property type="entry name" value="Peptidase_M17"/>
    <property type="match status" value="1"/>
</dbReference>
<dbReference type="Pfam" id="PF02789">
    <property type="entry name" value="Peptidase_M17_N"/>
    <property type="match status" value="1"/>
</dbReference>
<dbReference type="PRINTS" id="PR00481">
    <property type="entry name" value="LAMNOPPTDASE"/>
</dbReference>
<dbReference type="SUPFAM" id="SSF52949">
    <property type="entry name" value="Macro domain-like"/>
    <property type="match status" value="1"/>
</dbReference>
<dbReference type="SUPFAM" id="SSF53187">
    <property type="entry name" value="Zn-dependent exopeptidases"/>
    <property type="match status" value="1"/>
</dbReference>
<dbReference type="PROSITE" id="PS00631">
    <property type="entry name" value="CYTOSOL_AP"/>
    <property type="match status" value="1"/>
</dbReference>
<proteinExistence type="inferred from homology"/>
<accession>Q68XM6</accession>
<sequence>MLNINFVNEESSTNQGLIVFIDEQLKFDTSLMALDQQHYGLISKTIQNKLQFRGNYGQITIVPSVIKSGEVKYLIIVGLGNAEKLTEAKIEELGGKILQHATCAKISTIGLKIMSRINRFTPQTFTSLIASGAFLASYRFHKYKTTLKEVEKFAVESIEIFTDNNSEAIKLFEVKKLIAEAVFFTRDISNEPSNIKTPQVYAERIVDILEPLGVNVDVIGERDIKNLGMGALLGVGQGSQNESKLVVMEYKGGSRDDSTIALVGKGVIFDTGGISLKPSSNMHLMRYDMAGSAAVVGAIIALASQKATVNVVGVVGLVENMQSGNAQRPGDVVVTMSGQTAEVLNTDAEGRLVLADTVWYVQEKFNPKCVIDVATLTGAITVALGSTYAGCFSNNDELADKLIKAGEEVNEKLWRMPLHDDYDAMINSDIADIANIGNVPGAAGSCTAAHFIKRFIKDGVDWAHLDIAGVANSNNASALGPKGAVGYGVRLLEKFIKEYN</sequence>
<feature type="chain" id="PRO_0000165793" description="Probable cytosol aminopeptidase">
    <location>
        <begin position="1"/>
        <end position="500"/>
    </location>
</feature>
<feature type="active site" evidence="1">
    <location>
        <position position="277"/>
    </location>
</feature>
<feature type="active site" evidence="1">
    <location>
        <position position="351"/>
    </location>
</feature>
<feature type="binding site" evidence="1">
    <location>
        <position position="265"/>
    </location>
    <ligand>
        <name>Mn(2+)</name>
        <dbReference type="ChEBI" id="CHEBI:29035"/>
        <label>2</label>
    </ligand>
</feature>
<feature type="binding site" evidence="1">
    <location>
        <position position="270"/>
    </location>
    <ligand>
        <name>Mn(2+)</name>
        <dbReference type="ChEBI" id="CHEBI:29035"/>
        <label>1</label>
    </ligand>
</feature>
<feature type="binding site" evidence="1">
    <location>
        <position position="270"/>
    </location>
    <ligand>
        <name>Mn(2+)</name>
        <dbReference type="ChEBI" id="CHEBI:29035"/>
        <label>2</label>
    </ligand>
</feature>
<feature type="binding site" evidence="1">
    <location>
        <position position="288"/>
    </location>
    <ligand>
        <name>Mn(2+)</name>
        <dbReference type="ChEBI" id="CHEBI:29035"/>
        <label>2</label>
    </ligand>
</feature>
<feature type="binding site" evidence="1">
    <location>
        <position position="347"/>
    </location>
    <ligand>
        <name>Mn(2+)</name>
        <dbReference type="ChEBI" id="CHEBI:29035"/>
        <label>1</label>
    </ligand>
</feature>
<feature type="binding site" evidence="1">
    <location>
        <position position="349"/>
    </location>
    <ligand>
        <name>Mn(2+)</name>
        <dbReference type="ChEBI" id="CHEBI:29035"/>
        <label>1</label>
    </ligand>
</feature>
<feature type="binding site" evidence="1">
    <location>
        <position position="349"/>
    </location>
    <ligand>
        <name>Mn(2+)</name>
        <dbReference type="ChEBI" id="CHEBI:29035"/>
        <label>2</label>
    </ligand>
</feature>
<organism>
    <name type="scientific">Rickettsia typhi (strain ATCC VR-144 / Wilmington)</name>
    <dbReference type="NCBI Taxonomy" id="257363"/>
    <lineage>
        <taxon>Bacteria</taxon>
        <taxon>Pseudomonadati</taxon>
        <taxon>Pseudomonadota</taxon>
        <taxon>Alphaproteobacteria</taxon>
        <taxon>Rickettsiales</taxon>
        <taxon>Rickettsiaceae</taxon>
        <taxon>Rickettsieae</taxon>
        <taxon>Rickettsia</taxon>
        <taxon>typhus group</taxon>
    </lineage>
</organism>
<gene>
    <name evidence="1" type="primary">pepA</name>
    <name type="ordered locus">RT0131</name>
</gene>